<gene>
    <name type="primary">mepA</name>
    <name type="ordered locus">SAS0311</name>
</gene>
<proteinExistence type="inferred from homology"/>
<accession>Q6GCD7</accession>
<protein>
    <recommendedName>
        <fullName>Multidrug export protein MepA</fullName>
    </recommendedName>
</protein>
<evidence type="ECO:0000250" key="1"/>
<evidence type="ECO:0000255" key="2"/>
<evidence type="ECO:0000305" key="3"/>
<comment type="function">
    <text evidence="1">Multidrug resistance efflux protein.</text>
</comment>
<comment type="subcellular location">
    <subcellularLocation>
        <location evidence="3">Cell membrane</location>
        <topology evidence="3">Multi-pass membrane protein</topology>
    </subcellularLocation>
</comment>
<comment type="similarity">
    <text evidence="3">Belongs to the multi antimicrobial extrusion (MATE) (TC 2.A.66.1) family. MepA subfamily.</text>
</comment>
<organism>
    <name type="scientific">Staphylococcus aureus (strain MSSA476)</name>
    <dbReference type="NCBI Taxonomy" id="282459"/>
    <lineage>
        <taxon>Bacteria</taxon>
        <taxon>Bacillati</taxon>
        <taxon>Bacillota</taxon>
        <taxon>Bacilli</taxon>
        <taxon>Bacillales</taxon>
        <taxon>Staphylococcaceae</taxon>
        <taxon>Staphylococcus</taxon>
    </lineage>
</organism>
<feature type="chain" id="PRO_0000290230" description="Multidrug export protein MepA">
    <location>
        <begin position="1"/>
        <end position="451"/>
    </location>
</feature>
<feature type="transmembrane region" description="Helical" evidence="2">
    <location>
        <begin position="26"/>
        <end position="46"/>
    </location>
</feature>
<feature type="transmembrane region" description="Helical" evidence="2">
    <location>
        <begin position="54"/>
        <end position="74"/>
    </location>
</feature>
<feature type="transmembrane region" description="Helical" evidence="2">
    <location>
        <begin position="97"/>
        <end position="117"/>
    </location>
</feature>
<feature type="transmembrane region" description="Helical" evidence="2">
    <location>
        <begin position="139"/>
        <end position="159"/>
    </location>
</feature>
<feature type="transmembrane region" description="Helical" evidence="2">
    <location>
        <begin position="170"/>
        <end position="190"/>
    </location>
</feature>
<feature type="transmembrane region" description="Helical" evidence="2">
    <location>
        <begin position="194"/>
        <end position="214"/>
    </location>
</feature>
<feature type="transmembrane region" description="Helical" evidence="2">
    <location>
        <begin position="245"/>
        <end position="265"/>
    </location>
</feature>
<feature type="transmembrane region" description="Helical" evidence="2">
    <location>
        <begin position="282"/>
        <end position="302"/>
    </location>
</feature>
<feature type="transmembrane region" description="Helical" evidence="2">
    <location>
        <begin position="318"/>
        <end position="338"/>
    </location>
</feature>
<feature type="transmembrane region" description="Helical" evidence="2">
    <location>
        <begin position="355"/>
        <end position="375"/>
    </location>
</feature>
<feature type="transmembrane region" description="Helical" evidence="2">
    <location>
        <begin position="397"/>
        <end position="417"/>
    </location>
</feature>
<feature type="transmembrane region" description="Helical" evidence="2">
    <location>
        <begin position="418"/>
        <end position="438"/>
    </location>
</feature>
<name>MEPA_STAAS</name>
<keyword id="KW-0046">Antibiotic resistance</keyword>
<keyword id="KW-1003">Cell membrane</keyword>
<keyword id="KW-0472">Membrane</keyword>
<keyword id="KW-0812">Transmembrane</keyword>
<keyword id="KW-1133">Transmembrane helix</keyword>
<keyword id="KW-0813">Transport</keyword>
<reference key="1">
    <citation type="journal article" date="2004" name="Proc. Natl. Acad. Sci. U.S.A.">
        <title>Complete genomes of two clinical Staphylococcus aureus strains: evidence for the rapid evolution of virulence and drug resistance.</title>
        <authorList>
            <person name="Holden M.T.G."/>
            <person name="Feil E.J."/>
            <person name="Lindsay J.A."/>
            <person name="Peacock S.J."/>
            <person name="Day N.P.J."/>
            <person name="Enright M.C."/>
            <person name="Foster T.J."/>
            <person name="Moore C.E."/>
            <person name="Hurst L."/>
            <person name="Atkin R."/>
            <person name="Barron A."/>
            <person name="Bason N."/>
            <person name="Bentley S.D."/>
            <person name="Chillingworth C."/>
            <person name="Chillingworth T."/>
            <person name="Churcher C."/>
            <person name="Clark L."/>
            <person name="Corton C."/>
            <person name="Cronin A."/>
            <person name="Doggett J."/>
            <person name="Dowd L."/>
            <person name="Feltwell T."/>
            <person name="Hance Z."/>
            <person name="Harris B."/>
            <person name="Hauser H."/>
            <person name="Holroyd S."/>
            <person name="Jagels K."/>
            <person name="James K.D."/>
            <person name="Lennard N."/>
            <person name="Line A."/>
            <person name="Mayes R."/>
            <person name="Moule S."/>
            <person name="Mungall K."/>
            <person name="Ormond D."/>
            <person name="Quail M.A."/>
            <person name="Rabbinowitsch E."/>
            <person name="Rutherford K.M."/>
            <person name="Sanders M."/>
            <person name="Sharp S."/>
            <person name="Simmonds M."/>
            <person name="Stevens K."/>
            <person name="Whitehead S."/>
            <person name="Barrell B.G."/>
            <person name="Spratt B.G."/>
            <person name="Parkhill J."/>
        </authorList>
    </citation>
    <scope>NUCLEOTIDE SEQUENCE [LARGE SCALE GENOMIC DNA]</scope>
    <source>
        <strain>MSSA476</strain>
    </source>
</reference>
<sequence length="451" mass="48876">MKDEQLYYFEKSPVFKAMMHFSLPMMIGTLLSVIYGILNIYFIGFLEDSHMISAISLTLPVFAILMGLGNLFGVGAGTYISRLLGAKDYSKSKFVSSFSIYGGIALGLIVILVTLPFSDQIAAILGARGETLALTSNYLKVMFLSAPFVILFFILEQFARAIGAPMISMIGMLASVGLNIILDPILIFGFDLNVVGAALGTAISNVAAALFFIVYFMKNSDVVSVNIKLAKPNKEMLSEIFKIGIPAFLMSILMGFTGLVLNLFLAHYGNFAIASYGISFRLVQFPELIIMGLCEGVVPLIAYNFMANKGRMKDVIKAVIMSIGVIFVVCMIAVFTIGHHMVGLFTTDQDIVEMATFILKVTMTSLLLNGIGFLFTGMLQATGQGRGATIMAILQGAIIIPVLFIMNALFGLTGVIWSLLIAESLCALAAMLIVYLLRDRLTVDTSELIEG</sequence>
<dbReference type="EMBL" id="BX571857">
    <property type="protein sequence ID" value="CAG42082.1"/>
    <property type="molecule type" value="Genomic_DNA"/>
</dbReference>
<dbReference type="RefSeq" id="WP_000651054.1">
    <property type="nucleotide sequence ID" value="NC_002953.3"/>
</dbReference>
<dbReference type="SMR" id="Q6GCD7"/>
<dbReference type="KEGG" id="sas:SAS0311"/>
<dbReference type="HOGENOM" id="CLU_012893_0_1_9"/>
<dbReference type="GO" id="GO:0005886">
    <property type="term" value="C:plasma membrane"/>
    <property type="evidence" value="ECO:0007669"/>
    <property type="project" value="UniProtKB-SubCell"/>
</dbReference>
<dbReference type="GO" id="GO:0015297">
    <property type="term" value="F:antiporter activity"/>
    <property type="evidence" value="ECO:0007669"/>
    <property type="project" value="InterPro"/>
</dbReference>
<dbReference type="GO" id="GO:0042910">
    <property type="term" value="F:xenobiotic transmembrane transporter activity"/>
    <property type="evidence" value="ECO:0007669"/>
    <property type="project" value="InterPro"/>
</dbReference>
<dbReference type="GO" id="GO:0046677">
    <property type="term" value="P:response to antibiotic"/>
    <property type="evidence" value="ECO:0007669"/>
    <property type="project" value="UniProtKB-KW"/>
</dbReference>
<dbReference type="CDD" id="cd13143">
    <property type="entry name" value="MATE_MepA_like"/>
    <property type="match status" value="1"/>
</dbReference>
<dbReference type="InterPro" id="IPR002528">
    <property type="entry name" value="MATE_fam"/>
</dbReference>
<dbReference type="InterPro" id="IPR045070">
    <property type="entry name" value="MATE_MepA-like"/>
</dbReference>
<dbReference type="InterPro" id="IPR051327">
    <property type="entry name" value="MATE_MepA_subfamily"/>
</dbReference>
<dbReference type="InterPro" id="IPR048279">
    <property type="entry name" value="MdtK-like"/>
</dbReference>
<dbReference type="NCBIfam" id="TIGR00797">
    <property type="entry name" value="matE"/>
    <property type="match status" value="1"/>
</dbReference>
<dbReference type="NCBIfam" id="NF000131">
    <property type="entry name" value="MATE_multi_MepA"/>
    <property type="match status" value="1"/>
</dbReference>
<dbReference type="PANTHER" id="PTHR43823:SF3">
    <property type="entry name" value="MULTIDRUG EXPORT PROTEIN MEPA"/>
    <property type="match status" value="1"/>
</dbReference>
<dbReference type="PANTHER" id="PTHR43823">
    <property type="entry name" value="SPORULATION PROTEIN YKVU"/>
    <property type="match status" value="1"/>
</dbReference>
<dbReference type="Pfam" id="PF01554">
    <property type="entry name" value="MatE"/>
    <property type="match status" value="2"/>
</dbReference>
<dbReference type="PIRSF" id="PIRSF006603">
    <property type="entry name" value="DinF"/>
    <property type="match status" value="1"/>
</dbReference>